<evidence type="ECO:0000255" key="1">
    <source>
        <dbReference type="HAMAP-Rule" id="MF_00212"/>
    </source>
</evidence>
<organism>
    <name type="scientific">Mycobacterium sp. (strain MCS)</name>
    <dbReference type="NCBI Taxonomy" id="164756"/>
    <lineage>
        <taxon>Bacteria</taxon>
        <taxon>Bacillati</taxon>
        <taxon>Actinomycetota</taxon>
        <taxon>Actinomycetes</taxon>
        <taxon>Mycobacteriales</taxon>
        <taxon>Mycobacteriaceae</taxon>
        <taxon>Mycobacterium</taxon>
    </lineage>
</organism>
<feature type="chain" id="PRO_0000325504" description="Probable malate:quinone oxidoreductase">
    <location>
        <begin position="1"/>
        <end position="516"/>
    </location>
</feature>
<gene>
    <name evidence="1" type="primary">mqo</name>
    <name type="ordered locus">Mmcs_2069</name>
</gene>
<proteinExistence type="inferred from homology"/>
<name>MQO_MYCSS</name>
<reference key="1">
    <citation type="submission" date="2006-06" db="EMBL/GenBank/DDBJ databases">
        <title>Complete sequence of chromosome of Mycobacterium sp. MCS.</title>
        <authorList>
            <consortium name="US DOE Joint Genome Institute"/>
            <person name="Copeland A."/>
            <person name="Lucas S."/>
            <person name="Lapidus A."/>
            <person name="Barry K."/>
            <person name="Detter J.C."/>
            <person name="Glavina del Rio T."/>
            <person name="Hammon N."/>
            <person name="Israni S."/>
            <person name="Dalin E."/>
            <person name="Tice H."/>
            <person name="Pitluck S."/>
            <person name="Martinez M."/>
            <person name="Schmutz J."/>
            <person name="Larimer F."/>
            <person name="Land M."/>
            <person name="Hauser L."/>
            <person name="Kyrpides N."/>
            <person name="Kim E."/>
            <person name="Miller C.D."/>
            <person name="Hughes J.E."/>
            <person name="Anderson A.J."/>
            <person name="Sims R.C."/>
            <person name="Richardson P."/>
        </authorList>
    </citation>
    <scope>NUCLEOTIDE SEQUENCE [LARGE SCALE GENOMIC DNA]</scope>
    <source>
        <strain>MCS</strain>
    </source>
</reference>
<keyword id="KW-0274">FAD</keyword>
<keyword id="KW-0285">Flavoprotein</keyword>
<keyword id="KW-0560">Oxidoreductase</keyword>
<keyword id="KW-0816">Tricarboxylic acid cycle</keyword>
<dbReference type="EC" id="1.1.5.4" evidence="1"/>
<dbReference type="EMBL" id="CP000384">
    <property type="protein sequence ID" value="ABG08177.1"/>
    <property type="molecule type" value="Genomic_DNA"/>
</dbReference>
<dbReference type="SMR" id="Q1BAA7"/>
<dbReference type="KEGG" id="mmc:Mmcs_2069"/>
<dbReference type="HOGENOM" id="CLU_028151_0_0_11"/>
<dbReference type="BioCyc" id="MSP164756:G1G6O-2115-MONOMER"/>
<dbReference type="UniPathway" id="UPA00223">
    <property type="reaction ID" value="UER01008"/>
</dbReference>
<dbReference type="GO" id="GO:0047545">
    <property type="term" value="F:2-hydroxyglutarate dehydrogenase activity"/>
    <property type="evidence" value="ECO:0007669"/>
    <property type="project" value="TreeGrafter"/>
</dbReference>
<dbReference type="GO" id="GO:0008924">
    <property type="term" value="F:L-malate dehydrogenase (quinone) activity"/>
    <property type="evidence" value="ECO:0007669"/>
    <property type="project" value="UniProtKB-UniRule"/>
</dbReference>
<dbReference type="GO" id="GO:0006099">
    <property type="term" value="P:tricarboxylic acid cycle"/>
    <property type="evidence" value="ECO:0007669"/>
    <property type="project" value="UniProtKB-UniRule"/>
</dbReference>
<dbReference type="Gene3D" id="3.50.50.60">
    <property type="entry name" value="FAD/NAD(P)-binding domain"/>
    <property type="match status" value="1"/>
</dbReference>
<dbReference type="HAMAP" id="MF_00212">
    <property type="entry name" value="MQO"/>
    <property type="match status" value="1"/>
</dbReference>
<dbReference type="InterPro" id="IPR036188">
    <property type="entry name" value="FAD/NAD-bd_sf"/>
</dbReference>
<dbReference type="InterPro" id="IPR006231">
    <property type="entry name" value="MQO"/>
</dbReference>
<dbReference type="NCBIfam" id="TIGR01320">
    <property type="entry name" value="mal_quin_oxido"/>
    <property type="match status" value="1"/>
</dbReference>
<dbReference type="NCBIfam" id="NF003605">
    <property type="entry name" value="PRK05257.1-4"/>
    <property type="match status" value="1"/>
</dbReference>
<dbReference type="NCBIfam" id="NF003606">
    <property type="entry name" value="PRK05257.2-1"/>
    <property type="match status" value="1"/>
</dbReference>
<dbReference type="NCBIfam" id="NF003611">
    <property type="entry name" value="PRK05257.3-2"/>
    <property type="match status" value="1"/>
</dbReference>
<dbReference type="NCBIfam" id="NF009875">
    <property type="entry name" value="PRK13339.1"/>
    <property type="match status" value="1"/>
</dbReference>
<dbReference type="PANTHER" id="PTHR43104">
    <property type="entry name" value="L-2-HYDROXYGLUTARATE DEHYDROGENASE, MITOCHONDRIAL"/>
    <property type="match status" value="1"/>
</dbReference>
<dbReference type="PANTHER" id="PTHR43104:SF2">
    <property type="entry name" value="L-2-HYDROXYGLUTARATE DEHYDROGENASE, MITOCHONDRIAL"/>
    <property type="match status" value="1"/>
</dbReference>
<dbReference type="Pfam" id="PF06039">
    <property type="entry name" value="Mqo"/>
    <property type="match status" value="1"/>
</dbReference>
<dbReference type="SUPFAM" id="SSF51905">
    <property type="entry name" value="FAD/NAD(P)-binding domain"/>
    <property type="match status" value="1"/>
</dbReference>
<comment type="catalytic activity">
    <reaction evidence="1">
        <text>(S)-malate + a quinone = a quinol + oxaloacetate</text>
        <dbReference type="Rhea" id="RHEA:46012"/>
        <dbReference type="ChEBI" id="CHEBI:15589"/>
        <dbReference type="ChEBI" id="CHEBI:16452"/>
        <dbReference type="ChEBI" id="CHEBI:24646"/>
        <dbReference type="ChEBI" id="CHEBI:132124"/>
        <dbReference type="EC" id="1.1.5.4"/>
    </reaction>
</comment>
<comment type="cofactor">
    <cofactor evidence="1">
        <name>FAD</name>
        <dbReference type="ChEBI" id="CHEBI:57692"/>
    </cofactor>
</comment>
<comment type="pathway">
    <text evidence="1">Carbohydrate metabolism; tricarboxylic acid cycle; oxaloacetate from (S)-malate (quinone route): step 1/1.</text>
</comment>
<comment type="similarity">
    <text evidence="1">Belongs to the MQO family.</text>
</comment>
<accession>Q1BAA7</accession>
<sequence length="516" mass="56003">MSDAQVAKTDVVLVGAGIMSATLSALIKLLEPNWSITLIERLDGAAAESSDPWNNAGTGHSALCELNYTPEGPGGSIDITKAVHVNEQFQVSRQFWTYAVENGVLPDVRNFINPIPHVSFVSGARNVEYLRARYDALVPNPLFATMEYIDDRDEFARRLPFMADKRDFREPVALNWSQDGTDIDFGSLSRQLIGYTAQRGMTTLFGHEVRDLDKQSDGSWSVKVVNRRTGAKRKLNAKFVFVGAGGGALPLLQKAGIEEAKGFGGFPVGGQWLRTGNPELTARHQAKVYGMPPLGAPPMSVPHLDTRVINGKSWLLFGPFAGWSPKFLKQGKVTDLPFSVKPNNLASMLGVGLTEMGLLKYLIGQLLLSEADRVETLRNFAPSARDSDWELDIAGQRVQVIRRKGKGGVLEFGTTVLAAKDGSIAGLLGASPGASTAVPAMLDVMERCFGDRYTAWLPKLKEIVPSLGTKLSDEPKLFQEIWAHGTKVLKLDHPAAGLPVAGTDTEHREPATTVTA</sequence>
<protein>
    <recommendedName>
        <fullName evidence="1">Probable malate:quinone oxidoreductase</fullName>
        <ecNumber evidence="1">1.1.5.4</ecNumber>
    </recommendedName>
    <alternativeName>
        <fullName evidence="1">MQO</fullName>
    </alternativeName>
    <alternativeName>
        <fullName evidence="1">Malate dehydrogenase [quinone]</fullName>
    </alternativeName>
</protein>